<proteinExistence type="evidence at transcript level"/>
<name>HBS1L_PONAB</name>
<gene>
    <name type="primary">HBS1L</name>
</gene>
<sequence length="684" mass="75533">MARHRNVRGYNYDEDFEDDDLYGQSVEDDYCISPSTAAQFIYSRRDKPSVEPVEEYDYEDLKESSNSVSNHQLSGFDQARLYSCLDHMREILGDAVPDEILIEAVLKNKFDVQKALSGVLEQDRVQSLKDKNEGTVSTGKIAKGKPVDSQTSRSESEIVPKVAKMTVSGKKQTMGFEVPGVSSEENGHSFHTPQKGPPIEDAIASSDVLETASKSANPPHTIQASEEQSSTPAPVKKSGKLRQQIDVKAELEKRQGGKQLLNLVVIGHVDAGKSTLMGHMLYLLGNINKRTMHKYEQESKKAGKASFAYAWVLDETGEERERGVTMDVGMTKFETTTKVITLMDAPGHKDFIPNMITGAAQADVAVLVVDASRGEFEAGFETGGQTREHGLLVRSLGVTQLAVAVNKMDQVNWQQERFQEITGKLGHFLKQAGFKESDVAFIPTSGLSGENLITRSRSSELTKWYKGLCLLEQIDSFKPPQRSIDKPFRLCVSDVFKDQGSGFCITGKIEAGYIQTGDRLLAMPPNETCTVKGITLHDEPVDWAAAGDHVSLTLVGMDIIKINVGCIFCGPKVPIKACTRFRARILIFNIEIPITKGFPVLLHYQTVSEPAVIKRLISVLNKSTGEVTKKKPKFLTKGQNALVELQTQRPIALELYKDFKELGRFMLRYGGSTIAAGVVTEMKE</sequence>
<accession>Q5R6Y0</accession>
<keyword id="KW-0007">Acetylation</keyword>
<keyword id="KW-0963">Cytoplasm</keyword>
<keyword id="KW-0251">Elongation factor</keyword>
<keyword id="KW-0342">GTP-binding</keyword>
<keyword id="KW-0378">Hydrolase</keyword>
<keyword id="KW-0547">Nucleotide-binding</keyword>
<keyword id="KW-0597">Phosphoprotein</keyword>
<keyword id="KW-0648">Protein biosynthesis</keyword>
<keyword id="KW-1185">Reference proteome</keyword>
<keyword id="KW-0810">Translation regulation</keyword>
<dbReference type="EC" id="3.6.5.-" evidence="1"/>
<dbReference type="EMBL" id="CR860346">
    <property type="protein sequence ID" value="CAH92480.1"/>
    <property type="molecule type" value="mRNA"/>
</dbReference>
<dbReference type="RefSeq" id="NP_001126462.1">
    <property type="nucleotide sequence ID" value="NM_001132990.1"/>
</dbReference>
<dbReference type="SMR" id="Q5R6Y0"/>
<dbReference type="FunCoup" id="Q5R6Y0">
    <property type="interactions" value="1719"/>
</dbReference>
<dbReference type="STRING" id="9601.ENSPPYP00000019066"/>
<dbReference type="Ensembl" id="ENSPPYT00000019817.2">
    <property type="protein sequence ID" value="ENSPPYP00000019066.2"/>
    <property type="gene ID" value="ENSPPYG00000017027.3"/>
</dbReference>
<dbReference type="GeneID" id="100173449"/>
<dbReference type="KEGG" id="pon:100173449"/>
<dbReference type="CTD" id="10767"/>
<dbReference type="eggNOG" id="KOG0458">
    <property type="taxonomic scope" value="Eukaryota"/>
</dbReference>
<dbReference type="GeneTree" id="ENSGT00940000156274"/>
<dbReference type="HOGENOM" id="CLU_007265_3_6_1"/>
<dbReference type="InParanoid" id="Q5R6Y0"/>
<dbReference type="OMA" id="VVQITCH"/>
<dbReference type="OrthoDB" id="342024at2759"/>
<dbReference type="Proteomes" id="UP000001595">
    <property type="component" value="Chromosome 6"/>
</dbReference>
<dbReference type="GO" id="GO:0022626">
    <property type="term" value="C:cytosolic ribosome"/>
    <property type="evidence" value="ECO:0007669"/>
    <property type="project" value="Ensembl"/>
</dbReference>
<dbReference type="GO" id="GO:1990533">
    <property type="term" value="C:Dom34-Hbs1 complex"/>
    <property type="evidence" value="ECO:0000250"/>
    <property type="project" value="UniProtKB"/>
</dbReference>
<dbReference type="GO" id="GO:0005525">
    <property type="term" value="F:GTP binding"/>
    <property type="evidence" value="ECO:0007669"/>
    <property type="project" value="UniProtKB-KW"/>
</dbReference>
<dbReference type="GO" id="GO:0003924">
    <property type="term" value="F:GTPase activity"/>
    <property type="evidence" value="ECO:0007669"/>
    <property type="project" value="InterPro"/>
</dbReference>
<dbReference type="GO" id="GO:0003746">
    <property type="term" value="F:translation elongation factor activity"/>
    <property type="evidence" value="ECO:0007669"/>
    <property type="project" value="UniProtKB-KW"/>
</dbReference>
<dbReference type="GO" id="GO:0070966">
    <property type="term" value="P:nuclear-transcribed mRNA catabolic process, no-go decay"/>
    <property type="evidence" value="ECO:0000250"/>
    <property type="project" value="UniProtKB"/>
</dbReference>
<dbReference type="GO" id="GO:0006417">
    <property type="term" value="P:regulation of translation"/>
    <property type="evidence" value="ECO:0007669"/>
    <property type="project" value="UniProtKB-KW"/>
</dbReference>
<dbReference type="GO" id="GO:0072344">
    <property type="term" value="P:rescue of stalled ribosome"/>
    <property type="evidence" value="ECO:0007669"/>
    <property type="project" value="Ensembl"/>
</dbReference>
<dbReference type="GO" id="GO:0032790">
    <property type="term" value="P:ribosome disassembly"/>
    <property type="evidence" value="ECO:0000250"/>
    <property type="project" value="UniProtKB"/>
</dbReference>
<dbReference type="CDD" id="cd01883">
    <property type="entry name" value="EF1_alpha"/>
    <property type="match status" value="1"/>
</dbReference>
<dbReference type="CDD" id="cd16267">
    <property type="entry name" value="HBS1-like_II"/>
    <property type="match status" value="1"/>
</dbReference>
<dbReference type="CDD" id="cd04093">
    <property type="entry name" value="HBS1_C_III"/>
    <property type="match status" value="1"/>
</dbReference>
<dbReference type="FunFam" id="1.10.8.10:FF:000039">
    <property type="entry name" value="HBS1-like translational GTPase"/>
    <property type="match status" value="1"/>
</dbReference>
<dbReference type="FunFam" id="2.40.30.10:FF:000035">
    <property type="entry name" value="HBS1-like translational GTPase"/>
    <property type="match status" value="1"/>
</dbReference>
<dbReference type="FunFam" id="2.40.30.10:FF:000020">
    <property type="entry name" value="Translation elongation factor EF-1"/>
    <property type="match status" value="1"/>
</dbReference>
<dbReference type="FunFam" id="3.40.50.300:FF:000204">
    <property type="entry name" value="Translation elongation factor Tu"/>
    <property type="match status" value="1"/>
</dbReference>
<dbReference type="Gene3D" id="1.10.8.10">
    <property type="entry name" value="DNA helicase RuvA subunit, C-terminal domain"/>
    <property type="match status" value="1"/>
</dbReference>
<dbReference type="Gene3D" id="3.40.50.300">
    <property type="entry name" value="P-loop containing nucleotide triphosphate hydrolases"/>
    <property type="match status" value="1"/>
</dbReference>
<dbReference type="Gene3D" id="2.40.30.10">
    <property type="entry name" value="Translation factors"/>
    <property type="match status" value="2"/>
</dbReference>
<dbReference type="InterPro" id="IPR004161">
    <property type="entry name" value="EFTu-like_2"/>
</dbReference>
<dbReference type="InterPro" id="IPR054696">
    <property type="entry name" value="GTP-eEF1A_C"/>
</dbReference>
<dbReference type="InterPro" id="IPR015033">
    <property type="entry name" value="HBS1-like_N"/>
</dbReference>
<dbReference type="InterPro" id="IPR037189">
    <property type="entry name" value="HBS1-like_N_sf"/>
</dbReference>
<dbReference type="InterPro" id="IPR027417">
    <property type="entry name" value="P-loop_NTPase"/>
</dbReference>
<dbReference type="InterPro" id="IPR000795">
    <property type="entry name" value="T_Tr_GTP-bd_dom"/>
</dbReference>
<dbReference type="InterPro" id="IPR050100">
    <property type="entry name" value="TRAFAC_GTPase_members"/>
</dbReference>
<dbReference type="InterPro" id="IPR009000">
    <property type="entry name" value="Transl_B-barrel_sf"/>
</dbReference>
<dbReference type="InterPro" id="IPR009001">
    <property type="entry name" value="Transl_elong_EF1A/Init_IF2_C"/>
</dbReference>
<dbReference type="PANTHER" id="PTHR23115">
    <property type="entry name" value="TRANSLATION FACTOR"/>
    <property type="match status" value="1"/>
</dbReference>
<dbReference type="Pfam" id="PF22594">
    <property type="entry name" value="GTP-eEF1A_C"/>
    <property type="match status" value="1"/>
</dbReference>
<dbReference type="Pfam" id="PF00009">
    <property type="entry name" value="GTP_EFTU"/>
    <property type="match status" value="1"/>
</dbReference>
<dbReference type="Pfam" id="PF03144">
    <property type="entry name" value="GTP_EFTU_D2"/>
    <property type="match status" value="1"/>
</dbReference>
<dbReference type="Pfam" id="PF08938">
    <property type="entry name" value="HBS1_N"/>
    <property type="match status" value="1"/>
</dbReference>
<dbReference type="PRINTS" id="PR00315">
    <property type="entry name" value="ELONGATNFCT"/>
</dbReference>
<dbReference type="SUPFAM" id="SSF50465">
    <property type="entry name" value="EF-Tu/eEF-1alpha/eIF2-gamma C-terminal domain"/>
    <property type="match status" value="1"/>
</dbReference>
<dbReference type="SUPFAM" id="SSF109732">
    <property type="entry name" value="HBS1-like domain"/>
    <property type="match status" value="1"/>
</dbReference>
<dbReference type="SUPFAM" id="SSF52540">
    <property type="entry name" value="P-loop containing nucleoside triphosphate hydrolases"/>
    <property type="match status" value="1"/>
</dbReference>
<dbReference type="SUPFAM" id="SSF50447">
    <property type="entry name" value="Translation proteins"/>
    <property type="match status" value="1"/>
</dbReference>
<dbReference type="PROSITE" id="PS51722">
    <property type="entry name" value="G_TR_2"/>
    <property type="match status" value="1"/>
</dbReference>
<organism>
    <name type="scientific">Pongo abelii</name>
    <name type="common">Sumatran orangutan</name>
    <name type="synonym">Pongo pygmaeus abelii</name>
    <dbReference type="NCBI Taxonomy" id="9601"/>
    <lineage>
        <taxon>Eukaryota</taxon>
        <taxon>Metazoa</taxon>
        <taxon>Chordata</taxon>
        <taxon>Craniata</taxon>
        <taxon>Vertebrata</taxon>
        <taxon>Euteleostomi</taxon>
        <taxon>Mammalia</taxon>
        <taxon>Eutheria</taxon>
        <taxon>Euarchontoglires</taxon>
        <taxon>Primates</taxon>
        <taxon>Haplorrhini</taxon>
        <taxon>Catarrhini</taxon>
        <taxon>Hominidae</taxon>
        <taxon>Pongo</taxon>
    </lineage>
</organism>
<reference key="1">
    <citation type="submission" date="2004-11" db="EMBL/GenBank/DDBJ databases">
        <authorList>
            <consortium name="The German cDNA consortium"/>
        </authorList>
    </citation>
    <scope>NUCLEOTIDE SEQUENCE [LARGE SCALE MRNA]</scope>
    <source>
        <tissue>Brain cortex</tissue>
    </source>
</reference>
<protein>
    <recommendedName>
        <fullName evidence="6">HBS1-like protein</fullName>
        <ecNumber evidence="1">3.6.5.-</ecNumber>
    </recommendedName>
</protein>
<comment type="function">
    <text evidence="3">GTPase component of the Pelota-HBS1L complex, a complex that recognizes stalled ribosomes and triggers the No-Go Decay (NGD) pathway. The Pelota-HBS1L complex recognizes ribosomes stalled at the 3' end of an mRNA and engages stalled ribosomes by destabilizing mRNA in the mRNA channel. Following mRNA extraction from stalled ribosomes by the SKI complex, the Pelota-HBS1L complex promotes recruitment of ABCE1, which drives the disassembly of stalled ribosomes, followed by degradation of damaged mRNAs as part of the NGD pathway.</text>
</comment>
<comment type="catalytic activity">
    <reaction evidence="1">
        <text>GTP + H2O = GDP + phosphate + H(+)</text>
        <dbReference type="Rhea" id="RHEA:19669"/>
        <dbReference type="ChEBI" id="CHEBI:15377"/>
        <dbReference type="ChEBI" id="CHEBI:15378"/>
        <dbReference type="ChEBI" id="CHEBI:37565"/>
        <dbReference type="ChEBI" id="CHEBI:43474"/>
        <dbReference type="ChEBI" id="CHEBI:58189"/>
    </reaction>
    <physiologicalReaction direction="left-to-right" evidence="1">
        <dbReference type="Rhea" id="RHEA:19670"/>
    </physiologicalReaction>
</comment>
<comment type="subunit">
    <text evidence="3">Component of the Pelota-HBS1L complex, also named Dom34-Hbs1 complex, composed of PELO and HBS1L. Interacts with the SKI complex.</text>
</comment>
<comment type="subcellular location">
    <subcellularLocation>
        <location evidence="3">Cytoplasm</location>
    </subcellularLocation>
</comment>
<comment type="similarity">
    <text evidence="4">Belongs to the TRAFAC class translation factor GTPase superfamily. Classic translation factor GTPase family.</text>
</comment>
<feature type="chain" id="PRO_0000091493" description="HBS1-like protein">
    <location>
        <begin position="1"/>
        <end position="684"/>
    </location>
</feature>
<feature type="domain" description="tr-type G" evidence="4">
    <location>
        <begin position="258"/>
        <end position="482"/>
    </location>
</feature>
<feature type="region of interest" description="Disordered" evidence="5">
    <location>
        <begin position="130"/>
        <end position="241"/>
    </location>
</feature>
<feature type="region of interest" description="G1" evidence="4">
    <location>
        <begin position="267"/>
        <end position="274"/>
    </location>
</feature>
<feature type="region of interest" description="G2" evidence="4">
    <location>
        <begin position="323"/>
        <end position="327"/>
    </location>
</feature>
<feature type="region of interest" description="G3" evidence="4">
    <location>
        <begin position="344"/>
        <end position="347"/>
    </location>
</feature>
<feature type="region of interest" description="G4" evidence="4">
    <location>
        <begin position="406"/>
        <end position="409"/>
    </location>
</feature>
<feature type="region of interest" description="G5" evidence="4">
    <location>
        <begin position="445"/>
        <end position="447"/>
    </location>
</feature>
<feature type="compositionally biased region" description="Polar residues" evidence="5">
    <location>
        <begin position="212"/>
        <end position="232"/>
    </location>
</feature>
<feature type="binding site" evidence="3">
    <location>
        <begin position="267"/>
        <end position="274"/>
    </location>
    <ligand>
        <name>GTP</name>
        <dbReference type="ChEBI" id="CHEBI:37565"/>
    </ligand>
</feature>
<feature type="binding site" evidence="3">
    <location>
        <begin position="406"/>
        <end position="409"/>
    </location>
    <ligand>
        <name>GTP</name>
        <dbReference type="ChEBI" id="CHEBI:37565"/>
    </ligand>
</feature>
<feature type="binding site" evidence="3">
    <location>
        <begin position="445"/>
        <end position="447"/>
    </location>
    <ligand>
        <name>GTP</name>
        <dbReference type="ChEBI" id="CHEBI:37565"/>
    </ligand>
</feature>
<feature type="modified residue" description="Phosphoserine" evidence="3">
    <location>
        <position position="49"/>
    </location>
</feature>
<feature type="modified residue" description="Phosphoserine" evidence="3">
    <location>
        <position position="67"/>
    </location>
</feature>
<feature type="modified residue" description="Phosphoserine" evidence="3">
    <location>
        <position position="117"/>
    </location>
</feature>
<feature type="modified residue" description="Phosphoserine" evidence="3">
    <location>
        <position position="127"/>
    </location>
</feature>
<feature type="modified residue" description="Phosphoserine" evidence="2">
    <location>
        <position position="152"/>
    </location>
</feature>
<feature type="modified residue" description="Phosphoserine" evidence="3">
    <location>
        <position position="154"/>
    </location>
</feature>
<feature type="modified residue" description="Phosphothreonine" evidence="3">
    <location>
        <position position="231"/>
    </location>
</feature>
<feature type="modified residue" description="N6-acetyllysine" evidence="2">
    <location>
        <position position="622"/>
    </location>
</feature>
<evidence type="ECO:0000250" key="1">
    <source>
        <dbReference type="UniProtKB" id="P32769"/>
    </source>
</evidence>
<evidence type="ECO:0000250" key="2">
    <source>
        <dbReference type="UniProtKB" id="Q69ZS7"/>
    </source>
</evidence>
<evidence type="ECO:0000250" key="3">
    <source>
        <dbReference type="UniProtKB" id="Q9Y450"/>
    </source>
</evidence>
<evidence type="ECO:0000255" key="4">
    <source>
        <dbReference type="PROSITE-ProRule" id="PRU01059"/>
    </source>
</evidence>
<evidence type="ECO:0000256" key="5">
    <source>
        <dbReference type="SAM" id="MobiDB-lite"/>
    </source>
</evidence>
<evidence type="ECO:0000305" key="6"/>